<keyword id="KW-0479">Metal-binding</keyword>
<keyword id="KW-0687">Ribonucleoprotein</keyword>
<keyword id="KW-0689">Ribosomal protein</keyword>
<keyword id="KW-0694">RNA-binding</keyword>
<keyword id="KW-0699">rRNA-binding</keyword>
<keyword id="KW-0862">Zinc</keyword>
<name>RL31_ALTMD</name>
<accession>B4RYA0</accession>
<accession>F2G6B1</accession>
<gene>
    <name evidence="1" type="primary">rpmE</name>
    <name type="ordered locus">MADE_1018305</name>
</gene>
<proteinExistence type="inferred from homology"/>
<feature type="chain" id="PRO_1000126559" description="Large ribosomal subunit protein bL31">
    <location>
        <begin position="1"/>
        <end position="70"/>
    </location>
</feature>
<feature type="binding site" evidence="1">
    <location>
        <position position="16"/>
    </location>
    <ligand>
        <name>Zn(2+)</name>
        <dbReference type="ChEBI" id="CHEBI:29105"/>
    </ligand>
</feature>
<feature type="binding site" evidence="1">
    <location>
        <position position="18"/>
    </location>
    <ligand>
        <name>Zn(2+)</name>
        <dbReference type="ChEBI" id="CHEBI:29105"/>
    </ligand>
</feature>
<feature type="binding site" evidence="1">
    <location>
        <position position="37"/>
    </location>
    <ligand>
        <name>Zn(2+)</name>
        <dbReference type="ChEBI" id="CHEBI:29105"/>
    </ligand>
</feature>
<feature type="binding site" evidence="1">
    <location>
        <position position="40"/>
    </location>
    <ligand>
        <name>Zn(2+)</name>
        <dbReference type="ChEBI" id="CHEBI:29105"/>
    </ligand>
</feature>
<comment type="function">
    <text evidence="1">Binds the 23S rRNA.</text>
</comment>
<comment type="cofactor">
    <cofactor evidence="1">
        <name>Zn(2+)</name>
        <dbReference type="ChEBI" id="CHEBI:29105"/>
    </cofactor>
    <text evidence="1">Binds 1 zinc ion per subunit.</text>
</comment>
<comment type="subunit">
    <text evidence="1">Part of the 50S ribosomal subunit.</text>
</comment>
<comment type="similarity">
    <text evidence="1">Belongs to the bacterial ribosomal protein bL31 family. Type A subfamily.</text>
</comment>
<sequence length="70" mass="7880">MKQDIHPKYEEITATCSCGNVMKIRSTLGKDINLDVCSSCHPFYTGKQRNVDTGGRVDRFKKRFGALGKK</sequence>
<reference key="1">
    <citation type="journal article" date="2008" name="ISME J.">
        <title>Comparative genomics of two ecotypes of the marine planktonic copiotroph Alteromonas macleodii suggests alternative lifestyles associated with different kinds of particulate organic matter.</title>
        <authorList>
            <person name="Ivars-Martinez E."/>
            <person name="Martin-Cuadrado A.-B."/>
            <person name="D'Auria G."/>
            <person name="Mira A."/>
            <person name="Ferriera S."/>
            <person name="Johnson J."/>
            <person name="Friedman R."/>
            <person name="Rodriguez-Valera F."/>
        </authorList>
    </citation>
    <scope>NUCLEOTIDE SEQUENCE [LARGE SCALE GENOMIC DNA]</scope>
    <source>
        <strain>DSM 17117 / CIP 110805 / LMG 28347 / Deep ecotype</strain>
    </source>
</reference>
<protein>
    <recommendedName>
        <fullName evidence="1">Large ribosomal subunit protein bL31</fullName>
    </recommendedName>
    <alternativeName>
        <fullName evidence="2">50S ribosomal protein L31</fullName>
    </alternativeName>
</protein>
<organism>
    <name type="scientific">Alteromonas mediterranea (strain DSM 17117 / CIP 110805 / LMG 28347 / Deep ecotype)</name>
    <dbReference type="NCBI Taxonomy" id="1774373"/>
    <lineage>
        <taxon>Bacteria</taxon>
        <taxon>Pseudomonadati</taxon>
        <taxon>Pseudomonadota</taxon>
        <taxon>Gammaproteobacteria</taxon>
        <taxon>Alteromonadales</taxon>
        <taxon>Alteromonadaceae</taxon>
        <taxon>Alteromonas/Salinimonas group</taxon>
        <taxon>Alteromonas</taxon>
    </lineage>
</organism>
<dbReference type="EMBL" id="CP001103">
    <property type="protein sequence ID" value="AEA99785.1"/>
    <property type="molecule type" value="Genomic_DNA"/>
</dbReference>
<dbReference type="RefSeq" id="WP_012519872.1">
    <property type="nucleotide sequence ID" value="NC_011138.3"/>
</dbReference>
<dbReference type="SMR" id="B4RYA0"/>
<dbReference type="GeneID" id="56343901"/>
<dbReference type="KEGG" id="amc:MADE_1018305"/>
<dbReference type="HOGENOM" id="CLU_114306_4_3_6"/>
<dbReference type="Proteomes" id="UP000001870">
    <property type="component" value="Chromosome"/>
</dbReference>
<dbReference type="GO" id="GO:1990904">
    <property type="term" value="C:ribonucleoprotein complex"/>
    <property type="evidence" value="ECO:0007669"/>
    <property type="project" value="UniProtKB-KW"/>
</dbReference>
<dbReference type="GO" id="GO:0005840">
    <property type="term" value="C:ribosome"/>
    <property type="evidence" value="ECO:0007669"/>
    <property type="project" value="UniProtKB-KW"/>
</dbReference>
<dbReference type="GO" id="GO:0046872">
    <property type="term" value="F:metal ion binding"/>
    <property type="evidence" value="ECO:0007669"/>
    <property type="project" value="UniProtKB-KW"/>
</dbReference>
<dbReference type="GO" id="GO:0019843">
    <property type="term" value="F:rRNA binding"/>
    <property type="evidence" value="ECO:0007669"/>
    <property type="project" value="UniProtKB-KW"/>
</dbReference>
<dbReference type="GO" id="GO:0003735">
    <property type="term" value="F:structural constituent of ribosome"/>
    <property type="evidence" value="ECO:0007669"/>
    <property type="project" value="InterPro"/>
</dbReference>
<dbReference type="GO" id="GO:0006412">
    <property type="term" value="P:translation"/>
    <property type="evidence" value="ECO:0007669"/>
    <property type="project" value="UniProtKB-UniRule"/>
</dbReference>
<dbReference type="FunFam" id="4.10.830.30:FF:000001">
    <property type="entry name" value="50S ribosomal protein L31"/>
    <property type="match status" value="1"/>
</dbReference>
<dbReference type="Gene3D" id="4.10.830.30">
    <property type="entry name" value="Ribosomal protein L31"/>
    <property type="match status" value="1"/>
</dbReference>
<dbReference type="HAMAP" id="MF_00501">
    <property type="entry name" value="Ribosomal_bL31_1"/>
    <property type="match status" value="1"/>
</dbReference>
<dbReference type="InterPro" id="IPR034704">
    <property type="entry name" value="Ribosomal_bL28/bL31-like_sf"/>
</dbReference>
<dbReference type="InterPro" id="IPR002150">
    <property type="entry name" value="Ribosomal_bL31"/>
</dbReference>
<dbReference type="InterPro" id="IPR027491">
    <property type="entry name" value="Ribosomal_bL31_A"/>
</dbReference>
<dbReference type="InterPro" id="IPR042105">
    <property type="entry name" value="Ribosomal_bL31_sf"/>
</dbReference>
<dbReference type="NCBIfam" id="TIGR00105">
    <property type="entry name" value="L31"/>
    <property type="match status" value="1"/>
</dbReference>
<dbReference type="NCBIfam" id="NF000612">
    <property type="entry name" value="PRK00019.1"/>
    <property type="match status" value="1"/>
</dbReference>
<dbReference type="NCBIfam" id="NF001809">
    <property type="entry name" value="PRK00528.1"/>
    <property type="match status" value="1"/>
</dbReference>
<dbReference type="PANTHER" id="PTHR33280">
    <property type="entry name" value="50S RIBOSOMAL PROTEIN L31, CHLOROPLASTIC"/>
    <property type="match status" value="1"/>
</dbReference>
<dbReference type="PANTHER" id="PTHR33280:SF6">
    <property type="entry name" value="LARGE RIBOSOMAL SUBUNIT PROTEIN BL31A"/>
    <property type="match status" value="1"/>
</dbReference>
<dbReference type="Pfam" id="PF01197">
    <property type="entry name" value="Ribosomal_L31"/>
    <property type="match status" value="1"/>
</dbReference>
<dbReference type="PRINTS" id="PR01249">
    <property type="entry name" value="RIBOSOMALL31"/>
</dbReference>
<dbReference type="SUPFAM" id="SSF143800">
    <property type="entry name" value="L28p-like"/>
    <property type="match status" value="1"/>
</dbReference>
<dbReference type="PROSITE" id="PS01143">
    <property type="entry name" value="RIBOSOMAL_L31"/>
    <property type="match status" value="1"/>
</dbReference>
<evidence type="ECO:0000255" key="1">
    <source>
        <dbReference type="HAMAP-Rule" id="MF_00501"/>
    </source>
</evidence>
<evidence type="ECO:0000305" key="2"/>